<accession>P0CL04</accession>
<accession>P74867</accession>
<organism>
    <name type="scientific">Salmonella typhimurium (strain LT2 / SGSC1412 / ATCC 700720)</name>
    <dbReference type="NCBI Taxonomy" id="99287"/>
    <lineage>
        <taxon>Bacteria</taxon>
        <taxon>Pseudomonadati</taxon>
        <taxon>Pseudomonadota</taxon>
        <taxon>Gammaproteobacteria</taxon>
        <taxon>Enterobacterales</taxon>
        <taxon>Enterobacteriaceae</taxon>
        <taxon>Salmonella</taxon>
    </lineage>
</organism>
<evidence type="ECO:0000250" key="1"/>
<evidence type="ECO:0000255" key="2"/>
<evidence type="ECO:0000305" key="3"/>
<feature type="chain" id="PRO_0000108165" description="Threonine/homoserine exporter RhtA">
    <location>
        <begin position="1"/>
        <end position="295"/>
    </location>
</feature>
<feature type="topological domain" description="Cytoplasmic" evidence="2">
    <location>
        <begin position="1"/>
        <end position="7"/>
    </location>
</feature>
<feature type="transmembrane region" description="Helical" evidence="2">
    <location>
        <begin position="8"/>
        <end position="28"/>
    </location>
</feature>
<feature type="topological domain" description="Periplasmic" evidence="2">
    <location>
        <begin position="29"/>
        <end position="38"/>
    </location>
</feature>
<feature type="transmembrane region" description="Helical" evidence="2">
    <location>
        <begin position="39"/>
        <end position="59"/>
    </location>
</feature>
<feature type="topological domain" description="Cytoplasmic" evidence="2">
    <location>
        <begin position="60"/>
        <end position="71"/>
    </location>
</feature>
<feature type="transmembrane region" description="Helical" evidence="2">
    <location>
        <begin position="72"/>
        <end position="92"/>
    </location>
</feature>
<feature type="topological domain" description="Periplasmic" evidence="2">
    <location>
        <position position="93"/>
    </location>
</feature>
<feature type="transmembrane region" description="Helical" evidence="2">
    <location>
        <begin position="94"/>
        <end position="114"/>
    </location>
</feature>
<feature type="topological domain" description="Cytoplasmic" evidence="2">
    <location>
        <begin position="115"/>
        <end position="118"/>
    </location>
</feature>
<feature type="transmembrane region" description="Helical" evidence="2">
    <location>
        <begin position="119"/>
        <end position="139"/>
    </location>
</feature>
<feature type="topological domain" description="Periplasmic" evidence="2">
    <location>
        <begin position="140"/>
        <end position="146"/>
    </location>
</feature>
<feature type="transmembrane region" description="Helical" evidence="2">
    <location>
        <begin position="147"/>
        <end position="167"/>
    </location>
</feature>
<feature type="topological domain" description="Cytoplasmic" evidence="2">
    <location>
        <begin position="168"/>
        <end position="175"/>
    </location>
</feature>
<feature type="transmembrane region" description="Helical" evidence="2">
    <location>
        <begin position="176"/>
        <end position="196"/>
    </location>
</feature>
<feature type="topological domain" description="Periplasmic" evidence="2">
    <location>
        <begin position="197"/>
        <end position="200"/>
    </location>
</feature>
<feature type="transmembrane region" description="Helical" evidence="2">
    <location>
        <begin position="201"/>
        <end position="221"/>
    </location>
</feature>
<feature type="topological domain" description="Cytoplasmic" evidence="2">
    <location>
        <begin position="222"/>
        <end position="237"/>
    </location>
</feature>
<feature type="transmembrane region" description="Helical" evidence="2">
    <location>
        <begin position="238"/>
        <end position="258"/>
    </location>
</feature>
<feature type="topological domain" description="Periplasmic" evidence="2">
    <location>
        <begin position="259"/>
        <end position="262"/>
    </location>
</feature>
<feature type="transmembrane region" description="Helical" evidence="2">
    <location>
        <begin position="263"/>
        <end position="283"/>
    </location>
</feature>
<feature type="topological domain" description="Cytoplasmic" evidence="2">
    <location>
        <begin position="284"/>
        <end position="295"/>
    </location>
</feature>
<feature type="domain" description="EamA 1">
    <location>
        <begin position="30"/>
        <end position="135"/>
    </location>
</feature>
<feature type="domain" description="EamA 2">
    <location>
        <begin position="159"/>
        <end position="278"/>
    </location>
</feature>
<protein>
    <recommendedName>
        <fullName>Threonine/homoserine exporter RhtA</fullName>
    </recommendedName>
</protein>
<comment type="function">
    <text evidence="1">Involved in the efflux of threonine and homoserine.</text>
</comment>
<comment type="subcellular location">
    <subcellularLocation>
        <location evidence="1">Cell inner membrane</location>
        <topology evidence="1">Multi-pass membrane protein</topology>
    </subcellularLocation>
</comment>
<comment type="similarity">
    <text evidence="3">Belongs to the drug/metabolite transporter (DMT) superfamily. 10 TMS drug/metabolite exporter (DME) (TC 2.A.7.3) family.</text>
</comment>
<name>RHTA_SALTY</name>
<gene>
    <name type="primary">rhtA</name>
    <name type="ordered locus">STM0832</name>
</gene>
<keyword id="KW-0029">Amino-acid transport</keyword>
<keyword id="KW-0997">Cell inner membrane</keyword>
<keyword id="KW-1003">Cell membrane</keyword>
<keyword id="KW-0472">Membrane</keyword>
<keyword id="KW-1185">Reference proteome</keyword>
<keyword id="KW-0677">Repeat</keyword>
<keyword id="KW-0812">Transmembrane</keyword>
<keyword id="KW-1133">Transmembrane helix</keyword>
<keyword id="KW-0813">Transport</keyword>
<sequence>MPGSTRKLPVWLPILVLLIAMSSIQSGASLAKSLFPLVGAPGVTALRLALGTLILIAFFKPWRLRFAKEQRLPLLFYGLSLGGMNYLFYLSIQTVPLGIAVALEFTGPLAVALFSSRRPVDFIWVVLAVLGLWFLLPLGQDMSHVDLTGAALALGAGACWAVYILTGQRAGAEHGPATVAVGSLIAAIIFVPIGAVQAGDALWHWSILPLGLAVAVLSTALPYSLEMIALTRLPTRTFGTLMSMEPALAAVSGMIFLGETLTGIQILALCAIIAASMGSTLTIRREPQIKQVDVK</sequence>
<reference key="1">
    <citation type="journal article" date="2001" name="Nature">
        <title>Complete genome sequence of Salmonella enterica serovar Typhimurium LT2.</title>
        <authorList>
            <person name="McClelland M."/>
            <person name="Sanderson K.E."/>
            <person name="Spieth J."/>
            <person name="Clifton S.W."/>
            <person name="Latreille P."/>
            <person name="Courtney L."/>
            <person name="Porwollik S."/>
            <person name="Ali J."/>
            <person name="Dante M."/>
            <person name="Du F."/>
            <person name="Hou S."/>
            <person name="Layman D."/>
            <person name="Leonard S."/>
            <person name="Nguyen C."/>
            <person name="Scott K."/>
            <person name="Holmes A."/>
            <person name="Grewal N."/>
            <person name="Mulvaney E."/>
            <person name="Ryan E."/>
            <person name="Sun H."/>
            <person name="Florea L."/>
            <person name="Miller W."/>
            <person name="Stoneking T."/>
            <person name="Nhan M."/>
            <person name="Waterston R."/>
            <person name="Wilson R.K."/>
        </authorList>
    </citation>
    <scope>NUCLEOTIDE SEQUENCE [LARGE SCALE GENOMIC DNA]</scope>
    <source>
        <strain>LT2 / SGSC1412 / ATCC 700720</strain>
    </source>
</reference>
<dbReference type="EMBL" id="AE006468">
    <property type="protein sequence ID" value="AAL19768.1"/>
    <property type="molecule type" value="Genomic_DNA"/>
</dbReference>
<dbReference type="RefSeq" id="WP_001119554.1">
    <property type="nucleotide sequence ID" value="NC_003197.2"/>
</dbReference>
<dbReference type="SMR" id="P0CL04"/>
<dbReference type="STRING" id="99287.STM0832"/>
<dbReference type="PaxDb" id="99287-STM0832"/>
<dbReference type="KEGG" id="stm:STM0832"/>
<dbReference type="PATRIC" id="fig|99287.12.peg.867"/>
<dbReference type="HOGENOM" id="CLU_057295_0_1_6"/>
<dbReference type="OMA" id="MWAAYIV"/>
<dbReference type="PhylomeDB" id="P0CL04"/>
<dbReference type="BioCyc" id="SENT99287:STM0832-MONOMER"/>
<dbReference type="Proteomes" id="UP000001014">
    <property type="component" value="Chromosome"/>
</dbReference>
<dbReference type="GO" id="GO:0005886">
    <property type="term" value="C:plasma membrane"/>
    <property type="evidence" value="ECO:0000318"/>
    <property type="project" value="GO_Central"/>
</dbReference>
<dbReference type="GO" id="GO:0015565">
    <property type="term" value="F:threonine efflux transmembrane transporter activity"/>
    <property type="evidence" value="ECO:0000318"/>
    <property type="project" value="GO_Central"/>
</dbReference>
<dbReference type="InterPro" id="IPR050638">
    <property type="entry name" value="AA-Vitamin_Transporters"/>
</dbReference>
<dbReference type="InterPro" id="IPR000620">
    <property type="entry name" value="EamA_dom"/>
</dbReference>
<dbReference type="NCBIfam" id="NF007823">
    <property type="entry name" value="PRK10532.1"/>
    <property type="match status" value="1"/>
</dbReference>
<dbReference type="PANTHER" id="PTHR32322">
    <property type="entry name" value="INNER MEMBRANE TRANSPORTER"/>
    <property type="match status" value="1"/>
</dbReference>
<dbReference type="PANTHER" id="PTHR32322:SF18">
    <property type="entry name" value="S-ADENOSYLMETHIONINE_S-ADENOSYLHOMOCYSTEINE TRANSPORTER"/>
    <property type="match status" value="1"/>
</dbReference>
<dbReference type="Pfam" id="PF00892">
    <property type="entry name" value="EamA"/>
    <property type="match status" value="1"/>
</dbReference>
<dbReference type="SUPFAM" id="SSF103481">
    <property type="entry name" value="Multidrug resistance efflux transporter EmrE"/>
    <property type="match status" value="2"/>
</dbReference>
<proteinExistence type="inferred from homology"/>